<organism>
    <name type="scientific">Brucella melitensis biotype 2 (strain ATCC 23457)</name>
    <dbReference type="NCBI Taxonomy" id="546272"/>
    <lineage>
        <taxon>Bacteria</taxon>
        <taxon>Pseudomonadati</taxon>
        <taxon>Pseudomonadota</taxon>
        <taxon>Alphaproteobacteria</taxon>
        <taxon>Hyphomicrobiales</taxon>
        <taxon>Brucellaceae</taxon>
        <taxon>Brucella/Ochrobactrum group</taxon>
        <taxon>Brucella</taxon>
    </lineage>
</organism>
<comment type="function">
    <text evidence="1">Catalyzes the NADPH-dependent reduction of N-acetyl-5-glutamyl phosphate to yield N-acetyl-L-glutamate 5-semialdehyde.</text>
</comment>
<comment type="catalytic activity">
    <reaction evidence="1">
        <text>N-acetyl-L-glutamate 5-semialdehyde + phosphate + NADP(+) = N-acetyl-L-glutamyl 5-phosphate + NADPH + H(+)</text>
        <dbReference type="Rhea" id="RHEA:21588"/>
        <dbReference type="ChEBI" id="CHEBI:15378"/>
        <dbReference type="ChEBI" id="CHEBI:29123"/>
        <dbReference type="ChEBI" id="CHEBI:43474"/>
        <dbReference type="ChEBI" id="CHEBI:57783"/>
        <dbReference type="ChEBI" id="CHEBI:57936"/>
        <dbReference type="ChEBI" id="CHEBI:58349"/>
        <dbReference type="EC" id="1.2.1.38"/>
    </reaction>
</comment>
<comment type="pathway">
    <text evidence="1">Amino-acid biosynthesis; L-arginine biosynthesis; N(2)-acetyl-L-ornithine from L-glutamate: step 3/4.</text>
</comment>
<comment type="subcellular location">
    <subcellularLocation>
        <location evidence="1">Cytoplasm</location>
    </subcellularLocation>
</comment>
<comment type="similarity">
    <text evidence="1">Belongs to the NAGSA dehydrogenase family. Type 2 subfamily.</text>
</comment>
<reference key="1">
    <citation type="submission" date="2009-03" db="EMBL/GenBank/DDBJ databases">
        <title>Brucella melitensis ATCC 23457 whole genome shotgun sequencing project.</title>
        <authorList>
            <person name="Setubal J.C."/>
            <person name="Boyle S."/>
            <person name="Crasta O.R."/>
            <person name="Gillespie J.J."/>
            <person name="Kenyon R.W."/>
            <person name="Lu J."/>
            <person name="Mane S."/>
            <person name="Nagrani S."/>
            <person name="Shallom J.M."/>
            <person name="Shallom S."/>
            <person name="Shukla M."/>
            <person name="Snyder E.E."/>
            <person name="Sobral B.W."/>
            <person name="Wattam A.R."/>
            <person name="Will R."/>
            <person name="Williams K."/>
            <person name="Yoo H."/>
            <person name="Munk C."/>
            <person name="Tapia R."/>
            <person name="Han C."/>
            <person name="Detter J.C."/>
            <person name="Bruce D."/>
            <person name="Brettin T.S."/>
        </authorList>
    </citation>
    <scope>NUCLEOTIDE SEQUENCE [LARGE SCALE GENOMIC DNA]</scope>
    <source>
        <strain>ATCC 23457</strain>
    </source>
</reference>
<accession>C0RIC3</accession>
<proteinExistence type="inferred from homology"/>
<sequence>MKPKIFIDGEHGTTGLQIRTRLAERDDLEVISIPEAERRNKDLRADYLRAADIAILCLPDDASKEAVSLLEGHNSTRIIDTSTAHRVHPDWAYGFAELAKGQRERIAEARLVANPGCYPTGAIALVRPLRDAGLLPADYPVSVNAVSGYTGGGKQLIAQMEDRNHPDYLAANNFLYGLPLKHKHVPELQLHGRLDRRPIFSPSVGRFPQGMIVQVPLFLSELEGSPSLAKVHAVLTEHYAGQDIVEVVPLEESAKLPRVDAEELAGKDGMKLFVFGTEDHGQVNLVALLDNLGKGASGAAVQNMNLMLGK</sequence>
<dbReference type="EC" id="1.2.1.38" evidence="1"/>
<dbReference type="EMBL" id="CP001488">
    <property type="protein sequence ID" value="ACO00581.1"/>
    <property type="molecule type" value="Genomic_DNA"/>
</dbReference>
<dbReference type="RefSeq" id="WP_002963923.1">
    <property type="nucleotide sequence ID" value="NC_012441.1"/>
</dbReference>
<dbReference type="SMR" id="C0RIC3"/>
<dbReference type="GeneID" id="93016823"/>
<dbReference type="KEGG" id="bmi:BMEA_A0826"/>
<dbReference type="HOGENOM" id="CLU_077118_0_0_5"/>
<dbReference type="UniPathway" id="UPA00068">
    <property type="reaction ID" value="UER00108"/>
</dbReference>
<dbReference type="Proteomes" id="UP000001748">
    <property type="component" value="Chromosome I"/>
</dbReference>
<dbReference type="GO" id="GO:0005737">
    <property type="term" value="C:cytoplasm"/>
    <property type="evidence" value="ECO:0007669"/>
    <property type="project" value="UniProtKB-SubCell"/>
</dbReference>
<dbReference type="GO" id="GO:0003942">
    <property type="term" value="F:N-acetyl-gamma-glutamyl-phosphate reductase activity"/>
    <property type="evidence" value="ECO:0007669"/>
    <property type="project" value="UniProtKB-UniRule"/>
</dbReference>
<dbReference type="GO" id="GO:0051287">
    <property type="term" value="F:NAD binding"/>
    <property type="evidence" value="ECO:0007669"/>
    <property type="project" value="InterPro"/>
</dbReference>
<dbReference type="GO" id="GO:0006526">
    <property type="term" value="P:L-arginine biosynthetic process"/>
    <property type="evidence" value="ECO:0007669"/>
    <property type="project" value="UniProtKB-UniRule"/>
</dbReference>
<dbReference type="CDD" id="cd23935">
    <property type="entry name" value="AGPR_2_C"/>
    <property type="match status" value="1"/>
</dbReference>
<dbReference type="CDD" id="cd17896">
    <property type="entry name" value="AGPR_2_N"/>
    <property type="match status" value="1"/>
</dbReference>
<dbReference type="Gene3D" id="3.30.360.10">
    <property type="entry name" value="Dihydrodipicolinate Reductase, domain 2"/>
    <property type="match status" value="1"/>
</dbReference>
<dbReference type="Gene3D" id="3.40.50.720">
    <property type="entry name" value="NAD(P)-binding Rossmann-like Domain"/>
    <property type="match status" value="1"/>
</dbReference>
<dbReference type="HAMAP" id="MF_01110">
    <property type="entry name" value="ArgC_type2"/>
    <property type="match status" value="1"/>
</dbReference>
<dbReference type="InterPro" id="IPR023013">
    <property type="entry name" value="AGPR_AS"/>
</dbReference>
<dbReference type="InterPro" id="IPR010136">
    <property type="entry name" value="AGPR_type-2"/>
</dbReference>
<dbReference type="InterPro" id="IPR036291">
    <property type="entry name" value="NAD(P)-bd_dom_sf"/>
</dbReference>
<dbReference type="InterPro" id="IPR050085">
    <property type="entry name" value="NAGSA_dehydrogenase"/>
</dbReference>
<dbReference type="InterPro" id="IPR000534">
    <property type="entry name" value="Semialdehyde_DH_NAD-bd"/>
</dbReference>
<dbReference type="NCBIfam" id="TIGR01851">
    <property type="entry name" value="argC_other"/>
    <property type="match status" value="1"/>
</dbReference>
<dbReference type="PANTHER" id="PTHR32338:SF10">
    <property type="entry name" value="N-ACETYL-GAMMA-GLUTAMYL-PHOSPHATE REDUCTASE, CHLOROPLASTIC-RELATED"/>
    <property type="match status" value="1"/>
</dbReference>
<dbReference type="PANTHER" id="PTHR32338">
    <property type="entry name" value="N-ACETYL-GAMMA-GLUTAMYL-PHOSPHATE REDUCTASE, CHLOROPLASTIC-RELATED-RELATED"/>
    <property type="match status" value="1"/>
</dbReference>
<dbReference type="Pfam" id="PF01118">
    <property type="entry name" value="Semialdhyde_dh"/>
    <property type="match status" value="1"/>
</dbReference>
<dbReference type="Pfam" id="PF22698">
    <property type="entry name" value="Semialdhyde_dhC_1"/>
    <property type="match status" value="1"/>
</dbReference>
<dbReference type="SMART" id="SM00859">
    <property type="entry name" value="Semialdhyde_dh"/>
    <property type="match status" value="1"/>
</dbReference>
<dbReference type="SUPFAM" id="SSF55347">
    <property type="entry name" value="Glyceraldehyde-3-phosphate dehydrogenase-like, C-terminal domain"/>
    <property type="match status" value="1"/>
</dbReference>
<dbReference type="SUPFAM" id="SSF51735">
    <property type="entry name" value="NAD(P)-binding Rossmann-fold domains"/>
    <property type="match status" value="1"/>
</dbReference>
<dbReference type="PROSITE" id="PS01224">
    <property type="entry name" value="ARGC"/>
    <property type="match status" value="1"/>
</dbReference>
<feature type="chain" id="PRO_1000163993" description="N-acetyl-gamma-glutamyl-phosphate reductase">
    <location>
        <begin position="1"/>
        <end position="310"/>
    </location>
</feature>
<feature type="active site" evidence="1">
    <location>
        <position position="117"/>
    </location>
</feature>
<evidence type="ECO:0000255" key="1">
    <source>
        <dbReference type="HAMAP-Rule" id="MF_01110"/>
    </source>
</evidence>
<gene>
    <name evidence="1" type="primary">argC</name>
    <name type="ordered locus">BMEA_A0826</name>
</gene>
<name>ARGC_BRUMB</name>
<keyword id="KW-0028">Amino-acid biosynthesis</keyword>
<keyword id="KW-0055">Arginine biosynthesis</keyword>
<keyword id="KW-0963">Cytoplasm</keyword>
<keyword id="KW-0521">NADP</keyword>
<keyword id="KW-0560">Oxidoreductase</keyword>
<protein>
    <recommendedName>
        <fullName evidence="1">N-acetyl-gamma-glutamyl-phosphate reductase</fullName>
        <shortName evidence="1">AGPR</shortName>
        <ecNumber evidence="1">1.2.1.38</ecNumber>
    </recommendedName>
    <alternativeName>
        <fullName evidence="1">N-acetyl-glutamate semialdehyde dehydrogenase</fullName>
        <shortName evidence="1">NAGSA dehydrogenase</shortName>
    </alternativeName>
</protein>